<gene>
    <name evidence="1" type="primary">fadB</name>
    <name type="ordered locus">YPTB0267</name>
</gene>
<organism>
    <name type="scientific">Yersinia pseudotuberculosis serotype I (strain IP32953)</name>
    <dbReference type="NCBI Taxonomy" id="273123"/>
    <lineage>
        <taxon>Bacteria</taxon>
        <taxon>Pseudomonadati</taxon>
        <taxon>Pseudomonadota</taxon>
        <taxon>Gammaproteobacteria</taxon>
        <taxon>Enterobacterales</taxon>
        <taxon>Yersiniaceae</taxon>
        <taxon>Yersinia</taxon>
    </lineage>
</organism>
<feature type="chain" id="PRO_0000109296" description="Fatty acid oxidation complex subunit alpha">
    <location>
        <begin position="1"/>
        <end position="729"/>
    </location>
</feature>
<feature type="region of interest" description="Enoyl-CoA hydratase/isomerase" evidence="1">
    <location>
        <begin position="1"/>
        <end position="189"/>
    </location>
</feature>
<feature type="region of interest" description="3-hydroxyacyl-CoA dehydrogenase" evidence="1">
    <location>
        <begin position="311"/>
        <end position="729"/>
    </location>
</feature>
<feature type="active site" description="For 3-hydroxyacyl-CoA dehydrogenase activity" evidence="1">
    <location>
        <position position="450"/>
    </location>
</feature>
<feature type="binding site" evidence="1">
    <location>
        <position position="296"/>
    </location>
    <ligand>
        <name>substrate</name>
    </ligand>
</feature>
<feature type="binding site" evidence="1">
    <location>
        <position position="324"/>
    </location>
    <ligand>
        <name>NAD(+)</name>
        <dbReference type="ChEBI" id="CHEBI:57540"/>
    </ligand>
</feature>
<feature type="binding site" evidence="1">
    <location>
        <position position="343"/>
    </location>
    <ligand>
        <name>NAD(+)</name>
        <dbReference type="ChEBI" id="CHEBI:57540"/>
    </ligand>
</feature>
<feature type="binding site" evidence="1">
    <location>
        <begin position="400"/>
        <end position="402"/>
    </location>
    <ligand>
        <name>NAD(+)</name>
        <dbReference type="ChEBI" id="CHEBI:57540"/>
    </ligand>
</feature>
<feature type="binding site" evidence="1">
    <location>
        <position position="407"/>
    </location>
    <ligand>
        <name>NAD(+)</name>
        <dbReference type="ChEBI" id="CHEBI:57540"/>
    </ligand>
</feature>
<feature type="binding site" evidence="1">
    <location>
        <position position="429"/>
    </location>
    <ligand>
        <name>NAD(+)</name>
        <dbReference type="ChEBI" id="CHEBI:57540"/>
    </ligand>
</feature>
<feature type="binding site" evidence="1">
    <location>
        <position position="453"/>
    </location>
    <ligand>
        <name>NAD(+)</name>
        <dbReference type="ChEBI" id="CHEBI:57540"/>
    </ligand>
</feature>
<feature type="binding site" evidence="1">
    <location>
        <position position="500"/>
    </location>
    <ligand>
        <name>substrate</name>
    </ligand>
</feature>
<feature type="binding site" evidence="1">
    <location>
        <position position="660"/>
    </location>
    <ligand>
        <name>substrate</name>
    </ligand>
</feature>
<feature type="site" description="Important for catalytic activity" evidence="1">
    <location>
        <position position="119"/>
    </location>
</feature>
<feature type="site" description="Important for catalytic activity" evidence="1">
    <location>
        <position position="139"/>
    </location>
</feature>
<accession>Q66FR8</accession>
<reference key="1">
    <citation type="journal article" date="2004" name="Proc. Natl. Acad. Sci. U.S.A.">
        <title>Insights into the evolution of Yersinia pestis through whole-genome comparison with Yersinia pseudotuberculosis.</title>
        <authorList>
            <person name="Chain P.S.G."/>
            <person name="Carniel E."/>
            <person name="Larimer F.W."/>
            <person name="Lamerdin J."/>
            <person name="Stoutland P.O."/>
            <person name="Regala W.M."/>
            <person name="Georgescu A.M."/>
            <person name="Vergez L.M."/>
            <person name="Land M.L."/>
            <person name="Motin V.L."/>
            <person name="Brubaker R.R."/>
            <person name="Fowler J."/>
            <person name="Hinnebusch J."/>
            <person name="Marceau M."/>
            <person name="Medigue C."/>
            <person name="Simonet M."/>
            <person name="Chenal-Francisque V."/>
            <person name="Souza B."/>
            <person name="Dacheux D."/>
            <person name="Elliott J.M."/>
            <person name="Derbise A."/>
            <person name="Hauser L.J."/>
            <person name="Garcia E."/>
        </authorList>
    </citation>
    <scope>NUCLEOTIDE SEQUENCE [LARGE SCALE GENOMIC DNA]</scope>
    <source>
        <strain>IP32953</strain>
    </source>
</reference>
<comment type="function">
    <text evidence="1">Involved in the aerobic and anaerobic degradation of long-chain fatty acids via beta-oxidation cycle. Catalyzes the formation of 3-oxoacyl-CoA from enoyl-CoA via L-3-hydroxyacyl-CoA. It can also use D-3-hydroxyacyl-CoA and cis-3-enoyl-CoA as substrate.</text>
</comment>
<comment type="catalytic activity">
    <reaction evidence="1">
        <text>a (3S)-3-hydroxyacyl-CoA + NAD(+) = a 3-oxoacyl-CoA + NADH + H(+)</text>
        <dbReference type="Rhea" id="RHEA:22432"/>
        <dbReference type="ChEBI" id="CHEBI:15378"/>
        <dbReference type="ChEBI" id="CHEBI:57318"/>
        <dbReference type="ChEBI" id="CHEBI:57540"/>
        <dbReference type="ChEBI" id="CHEBI:57945"/>
        <dbReference type="ChEBI" id="CHEBI:90726"/>
        <dbReference type="EC" id="1.1.1.35"/>
    </reaction>
</comment>
<comment type="catalytic activity">
    <reaction evidence="1">
        <text>a (3S)-3-hydroxyacyl-CoA = a (2E)-enoyl-CoA + H2O</text>
        <dbReference type="Rhea" id="RHEA:16105"/>
        <dbReference type="ChEBI" id="CHEBI:15377"/>
        <dbReference type="ChEBI" id="CHEBI:57318"/>
        <dbReference type="ChEBI" id="CHEBI:58856"/>
        <dbReference type="EC" id="4.2.1.17"/>
    </reaction>
</comment>
<comment type="catalytic activity">
    <reaction evidence="1">
        <text>a 4-saturated-(3S)-3-hydroxyacyl-CoA = a (3E)-enoyl-CoA + H2O</text>
        <dbReference type="Rhea" id="RHEA:20724"/>
        <dbReference type="ChEBI" id="CHEBI:15377"/>
        <dbReference type="ChEBI" id="CHEBI:58521"/>
        <dbReference type="ChEBI" id="CHEBI:137480"/>
        <dbReference type="EC" id="4.2.1.17"/>
    </reaction>
</comment>
<comment type="catalytic activity">
    <reaction evidence="1">
        <text>(3S)-3-hydroxybutanoyl-CoA = (3R)-3-hydroxybutanoyl-CoA</text>
        <dbReference type="Rhea" id="RHEA:21760"/>
        <dbReference type="ChEBI" id="CHEBI:57315"/>
        <dbReference type="ChEBI" id="CHEBI:57316"/>
        <dbReference type="EC" id="5.1.2.3"/>
    </reaction>
</comment>
<comment type="catalytic activity">
    <reaction evidence="1">
        <text>a (3Z)-enoyl-CoA = a 4-saturated (2E)-enoyl-CoA</text>
        <dbReference type="Rhea" id="RHEA:45900"/>
        <dbReference type="ChEBI" id="CHEBI:85097"/>
        <dbReference type="ChEBI" id="CHEBI:85489"/>
        <dbReference type="EC" id="5.3.3.8"/>
    </reaction>
</comment>
<comment type="catalytic activity">
    <reaction evidence="1">
        <text>a (3E)-enoyl-CoA = a 4-saturated (2E)-enoyl-CoA</text>
        <dbReference type="Rhea" id="RHEA:45228"/>
        <dbReference type="ChEBI" id="CHEBI:58521"/>
        <dbReference type="ChEBI" id="CHEBI:85097"/>
        <dbReference type="EC" id="5.3.3.8"/>
    </reaction>
</comment>
<comment type="pathway">
    <text evidence="1">Lipid metabolism; fatty acid beta-oxidation.</text>
</comment>
<comment type="subunit">
    <text evidence="1">Heterotetramer of two alpha chains (FadB) and two beta chains (FadA).</text>
</comment>
<comment type="similarity">
    <text evidence="1">In the N-terminal section; belongs to the enoyl-CoA hydratase/isomerase family.</text>
</comment>
<comment type="similarity">
    <text evidence="1">In the C-terminal section; belongs to the 3-hydroxyacyl-CoA dehydrogenase family.</text>
</comment>
<evidence type="ECO:0000255" key="1">
    <source>
        <dbReference type="HAMAP-Rule" id="MF_01621"/>
    </source>
</evidence>
<proteinExistence type="inferred from homology"/>
<dbReference type="EC" id="4.2.1.17" evidence="1"/>
<dbReference type="EC" id="5.1.2.3" evidence="1"/>
<dbReference type="EC" id="5.3.3.8" evidence="1"/>
<dbReference type="EC" id="1.1.1.35" evidence="1"/>
<dbReference type="EMBL" id="BX936398">
    <property type="protein sequence ID" value="CAH19507.1"/>
    <property type="molecule type" value="Genomic_DNA"/>
</dbReference>
<dbReference type="RefSeq" id="WP_011191547.1">
    <property type="nucleotide sequence ID" value="NC_006155.1"/>
</dbReference>
<dbReference type="SMR" id="Q66FR8"/>
<dbReference type="KEGG" id="ypo:BZ17_2316"/>
<dbReference type="KEGG" id="yps:YPTB0267"/>
<dbReference type="PATRIC" id="fig|273123.14.peg.2439"/>
<dbReference type="UniPathway" id="UPA00659"/>
<dbReference type="Proteomes" id="UP000001011">
    <property type="component" value="Chromosome"/>
</dbReference>
<dbReference type="GO" id="GO:0036125">
    <property type="term" value="C:fatty acid beta-oxidation multienzyme complex"/>
    <property type="evidence" value="ECO:0007669"/>
    <property type="project" value="InterPro"/>
</dbReference>
<dbReference type="GO" id="GO:0008692">
    <property type="term" value="F:3-hydroxybutyryl-CoA epimerase activity"/>
    <property type="evidence" value="ECO:0007669"/>
    <property type="project" value="UniProtKB-UniRule"/>
</dbReference>
<dbReference type="GO" id="GO:0004165">
    <property type="term" value="F:delta(3)-delta(2)-enoyl-CoA isomerase activity"/>
    <property type="evidence" value="ECO:0007669"/>
    <property type="project" value="UniProtKB-UniRule"/>
</dbReference>
<dbReference type="GO" id="GO:0004300">
    <property type="term" value="F:enoyl-CoA hydratase activity"/>
    <property type="evidence" value="ECO:0007669"/>
    <property type="project" value="UniProtKB-UniRule"/>
</dbReference>
<dbReference type="GO" id="GO:0016509">
    <property type="term" value="F:long-chain-3-hydroxyacyl-CoA dehydrogenase activity"/>
    <property type="evidence" value="ECO:0007669"/>
    <property type="project" value="TreeGrafter"/>
</dbReference>
<dbReference type="GO" id="GO:0070403">
    <property type="term" value="F:NAD+ binding"/>
    <property type="evidence" value="ECO:0007669"/>
    <property type="project" value="InterPro"/>
</dbReference>
<dbReference type="GO" id="GO:0006635">
    <property type="term" value="P:fatty acid beta-oxidation"/>
    <property type="evidence" value="ECO:0007669"/>
    <property type="project" value="UniProtKB-UniRule"/>
</dbReference>
<dbReference type="CDD" id="cd06558">
    <property type="entry name" value="crotonase-like"/>
    <property type="match status" value="1"/>
</dbReference>
<dbReference type="FunFam" id="1.10.1040.50:FF:000001">
    <property type="entry name" value="Fatty acid oxidation complex subunit alpha"/>
    <property type="match status" value="1"/>
</dbReference>
<dbReference type="FunFam" id="3.90.226.10:FF:000018">
    <property type="entry name" value="Fatty acid oxidation complex subunit alpha"/>
    <property type="match status" value="1"/>
</dbReference>
<dbReference type="FunFam" id="3.40.50.720:FF:000009">
    <property type="entry name" value="Fatty oxidation complex, alpha subunit"/>
    <property type="match status" value="1"/>
</dbReference>
<dbReference type="Gene3D" id="1.10.1040.50">
    <property type="match status" value="1"/>
</dbReference>
<dbReference type="Gene3D" id="3.90.226.10">
    <property type="entry name" value="2-enoyl-CoA Hydratase, Chain A, domain 1"/>
    <property type="match status" value="1"/>
</dbReference>
<dbReference type="Gene3D" id="3.40.50.720">
    <property type="entry name" value="NAD(P)-binding Rossmann-like Domain"/>
    <property type="match status" value="1"/>
</dbReference>
<dbReference type="HAMAP" id="MF_01621">
    <property type="entry name" value="FadB"/>
    <property type="match status" value="1"/>
</dbReference>
<dbReference type="InterPro" id="IPR006180">
    <property type="entry name" value="3-OHacyl-CoA_DH_CS"/>
</dbReference>
<dbReference type="InterPro" id="IPR006176">
    <property type="entry name" value="3-OHacyl-CoA_DH_NAD-bd"/>
</dbReference>
<dbReference type="InterPro" id="IPR006108">
    <property type="entry name" value="3HC_DH_C"/>
</dbReference>
<dbReference type="InterPro" id="IPR008927">
    <property type="entry name" value="6-PGluconate_DH-like_C_sf"/>
</dbReference>
<dbReference type="InterPro" id="IPR029045">
    <property type="entry name" value="ClpP/crotonase-like_dom_sf"/>
</dbReference>
<dbReference type="InterPro" id="IPR018376">
    <property type="entry name" value="Enoyl-CoA_hyd/isom_CS"/>
</dbReference>
<dbReference type="InterPro" id="IPR001753">
    <property type="entry name" value="Enoyl-CoA_hydra/iso"/>
</dbReference>
<dbReference type="InterPro" id="IPR050136">
    <property type="entry name" value="FA_oxidation_alpha_subunit"/>
</dbReference>
<dbReference type="InterPro" id="IPR012799">
    <property type="entry name" value="FadB"/>
</dbReference>
<dbReference type="InterPro" id="IPR036291">
    <property type="entry name" value="NAD(P)-bd_dom_sf"/>
</dbReference>
<dbReference type="NCBIfam" id="TIGR02437">
    <property type="entry name" value="FadB"/>
    <property type="match status" value="1"/>
</dbReference>
<dbReference type="NCBIfam" id="NF008727">
    <property type="entry name" value="PRK11730.1"/>
    <property type="match status" value="1"/>
</dbReference>
<dbReference type="PANTHER" id="PTHR43612">
    <property type="entry name" value="TRIFUNCTIONAL ENZYME SUBUNIT ALPHA"/>
    <property type="match status" value="1"/>
</dbReference>
<dbReference type="PANTHER" id="PTHR43612:SF3">
    <property type="entry name" value="TRIFUNCTIONAL ENZYME SUBUNIT ALPHA, MITOCHONDRIAL"/>
    <property type="match status" value="1"/>
</dbReference>
<dbReference type="Pfam" id="PF00725">
    <property type="entry name" value="3HCDH"/>
    <property type="match status" value="1"/>
</dbReference>
<dbReference type="Pfam" id="PF02737">
    <property type="entry name" value="3HCDH_N"/>
    <property type="match status" value="1"/>
</dbReference>
<dbReference type="Pfam" id="PF00378">
    <property type="entry name" value="ECH_1"/>
    <property type="match status" value="1"/>
</dbReference>
<dbReference type="SUPFAM" id="SSF48179">
    <property type="entry name" value="6-phosphogluconate dehydrogenase C-terminal domain-like"/>
    <property type="match status" value="2"/>
</dbReference>
<dbReference type="SUPFAM" id="SSF52096">
    <property type="entry name" value="ClpP/crotonase"/>
    <property type="match status" value="1"/>
</dbReference>
<dbReference type="SUPFAM" id="SSF51735">
    <property type="entry name" value="NAD(P)-binding Rossmann-fold domains"/>
    <property type="match status" value="1"/>
</dbReference>
<dbReference type="PROSITE" id="PS00067">
    <property type="entry name" value="3HCDH"/>
    <property type="match status" value="1"/>
</dbReference>
<dbReference type="PROSITE" id="PS00166">
    <property type="entry name" value="ENOYL_COA_HYDRATASE"/>
    <property type="match status" value="1"/>
</dbReference>
<keyword id="KW-0276">Fatty acid metabolism</keyword>
<keyword id="KW-0413">Isomerase</keyword>
<keyword id="KW-0442">Lipid degradation</keyword>
<keyword id="KW-0443">Lipid metabolism</keyword>
<keyword id="KW-0456">Lyase</keyword>
<keyword id="KW-0511">Multifunctional enzyme</keyword>
<keyword id="KW-0520">NAD</keyword>
<keyword id="KW-0560">Oxidoreductase</keyword>
<sequence length="729" mass="78798">MLYQSETLQLHWLENGIAELVFDAPGSVNKLDTKTVANLGEALNVLEKQSELKGLLLRSAKTALIVGADITEFLSLFNAPPEKLHQWLVFANTIFNRLEDLPVPTISAINGYALGGGCECILATDFRIASPEARIGLPETKLGIMPGFGGSVRLPRLLGADSALEIIATGKDVTANDALKIGLVDAVVDPEKLVGSALTMLKQAIDGKLDWQAARRPKLEPLKLNPTEAAMCFTIAKGRVMQVAGKHYPAPLTAVKTIEAAAKFGRTEALNLETNSFVPLAGSNEARALVGIFLNDQYVKAQAKKLSKGVAAPKLAAVLGAGIMGGGIAYQSALKSVPVIMKDINENSLDLGMNEAAKLLNKQLERGKVDGLKMASILATIRPTLDYAGIERAQVIVEAVVENPKVKAAVLAEVEALIGEDTVLASNTSTIPIDQLAKSLKRPENFCGMHFFNPVHQMPLVEIIRGAKTSDKTLAAVVAYATQMGKTPIVVNDCPGFFVNRVLFPYLAGFGMLVRDGGDFHQIDKVMEKQFGWPMGPAYLLDVVGIDTAHHAQAVMAAGFPERMNKDYRDAVDVMFDNQRFGQKNGQGFYRYTQDAKGKPRKENDEQVDKLLAEISQPLQEFSDEDIIARTMIPMINEVVRCLEEGIIASAAEGDMALVYGLGFPPFHGGVFRYLDTLGSANYVEMAQRYAHLGALYHVPAGLRAKAEHNESYYPVAAALLDVSTNQPA</sequence>
<name>FADB_YERPS</name>
<protein>
    <recommendedName>
        <fullName evidence="1">Fatty acid oxidation complex subunit alpha</fullName>
    </recommendedName>
    <domain>
        <recommendedName>
            <fullName evidence="1">Enoyl-CoA hydratase/Delta(3)-cis-Delta(2)-trans-enoyl-CoA isomerase/3-hydroxybutyryl-CoA epimerase</fullName>
            <ecNumber evidence="1">4.2.1.17</ecNumber>
            <ecNumber evidence="1">5.1.2.3</ecNumber>
            <ecNumber evidence="1">5.3.3.8</ecNumber>
        </recommendedName>
    </domain>
    <domain>
        <recommendedName>
            <fullName evidence="1">3-hydroxyacyl-CoA dehydrogenase</fullName>
            <ecNumber evidence="1">1.1.1.35</ecNumber>
        </recommendedName>
    </domain>
</protein>